<proteinExistence type="inferred from homology"/>
<sequence>MAIGVIGRKCGMTRVFTEEGVSVPVTVIEVGPNRVSQVKTEESDGYQAVQVTVGERRASRVTKAQAGHFAKAGVEAGRGVWEFRAEAGEFEAGSSVTVEGFEAGQMIDVTGTSKGKGFAGGVKRWNFSTQDATHGNSLSHRAPGSIGQNQTPGRVFKGKKMAGHLGAERVTVQNLEVVRVDADKNLLLVKGAVPGATGGDVIVRLAVKAKA</sequence>
<keyword id="KW-0488">Methylation</keyword>
<keyword id="KW-1185">Reference proteome</keyword>
<keyword id="KW-0687">Ribonucleoprotein</keyword>
<keyword id="KW-0689">Ribosomal protein</keyword>
<keyword id="KW-0694">RNA-binding</keyword>
<keyword id="KW-0699">rRNA-binding</keyword>
<feature type="chain" id="PRO_1000052005" description="Large ribosomal subunit protein uL3">
    <location>
        <begin position="1"/>
        <end position="211"/>
    </location>
</feature>
<feature type="region of interest" description="Disordered" evidence="2">
    <location>
        <begin position="130"/>
        <end position="151"/>
    </location>
</feature>
<feature type="compositionally biased region" description="Polar residues" evidence="2">
    <location>
        <begin position="130"/>
        <end position="139"/>
    </location>
</feature>
<feature type="modified residue" description="N5-methylglutamine" evidence="1">
    <location>
        <position position="150"/>
    </location>
</feature>
<reference key="1">
    <citation type="journal article" date="2006" name="Nat. Biotechnol.">
        <title>Genome sequence of the ubiquitous hydrocarbon-degrading marine bacterium Alcanivorax borkumensis.</title>
        <authorList>
            <person name="Schneiker S."/>
            <person name="Martins dos Santos V.A.P."/>
            <person name="Bartels D."/>
            <person name="Bekel T."/>
            <person name="Brecht M."/>
            <person name="Buhrmester J."/>
            <person name="Chernikova T.N."/>
            <person name="Denaro R."/>
            <person name="Ferrer M."/>
            <person name="Gertler C."/>
            <person name="Goesmann A."/>
            <person name="Golyshina O.V."/>
            <person name="Kaminski F."/>
            <person name="Khachane A.N."/>
            <person name="Lang S."/>
            <person name="Linke B."/>
            <person name="McHardy A.C."/>
            <person name="Meyer F."/>
            <person name="Nechitaylo T."/>
            <person name="Puehler A."/>
            <person name="Regenhardt D."/>
            <person name="Rupp O."/>
            <person name="Sabirova J.S."/>
            <person name="Selbitschka W."/>
            <person name="Yakimov M.M."/>
            <person name="Timmis K.N."/>
            <person name="Vorhoelter F.-J."/>
            <person name="Weidner S."/>
            <person name="Kaiser O."/>
            <person name="Golyshin P.N."/>
        </authorList>
    </citation>
    <scope>NUCLEOTIDE SEQUENCE [LARGE SCALE GENOMIC DNA]</scope>
    <source>
        <strain>ATCC 700651 / DSM 11573 / NCIMB 13689 / SK2</strain>
    </source>
</reference>
<organism>
    <name type="scientific">Alcanivorax borkumensis (strain ATCC 700651 / DSM 11573 / NCIMB 13689 / SK2)</name>
    <dbReference type="NCBI Taxonomy" id="393595"/>
    <lineage>
        <taxon>Bacteria</taxon>
        <taxon>Pseudomonadati</taxon>
        <taxon>Pseudomonadota</taxon>
        <taxon>Gammaproteobacteria</taxon>
        <taxon>Oceanospirillales</taxon>
        <taxon>Alcanivoracaceae</taxon>
        <taxon>Alcanivorax</taxon>
    </lineage>
</organism>
<evidence type="ECO:0000255" key="1">
    <source>
        <dbReference type="HAMAP-Rule" id="MF_01325"/>
    </source>
</evidence>
<evidence type="ECO:0000256" key="2">
    <source>
        <dbReference type="SAM" id="MobiDB-lite"/>
    </source>
</evidence>
<evidence type="ECO:0000305" key="3"/>
<accession>Q0VSK3</accession>
<dbReference type="EMBL" id="AM286690">
    <property type="protein sequence ID" value="CAL15845.1"/>
    <property type="molecule type" value="Genomic_DNA"/>
</dbReference>
<dbReference type="RefSeq" id="WP_011587690.1">
    <property type="nucleotide sequence ID" value="NC_008260.1"/>
</dbReference>
<dbReference type="SMR" id="Q0VSK3"/>
<dbReference type="STRING" id="393595.ABO_0397"/>
<dbReference type="KEGG" id="abo:ABO_0397"/>
<dbReference type="eggNOG" id="COG0087">
    <property type="taxonomic scope" value="Bacteria"/>
</dbReference>
<dbReference type="HOGENOM" id="CLU_044142_4_1_6"/>
<dbReference type="OrthoDB" id="9806135at2"/>
<dbReference type="Proteomes" id="UP000008871">
    <property type="component" value="Chromosome"/>
</dbReference>
<dbReference type="GO" id="GO:0022625">
    <property type="term" value="C:cytosolic large ribosomal subunit"/>
    <property type="evidence" value="ECO:0007669"/>
    <property type="project" value="TreeGrafter"/>
</dbReference>
<dbReference type="GO" id="GO:0019843">
    <property type="term" value="F:rRNA binding"/>
    <property type="evidence" value="ECO:0007669"/>
    <property type="project" value="UniProtKB-UniRule"/>
</dbReference>
<dbReference type="GO" id="GO:0003735">
    <property type="term" value="F:structural constituent of ribosome"/>
    <property type="evidence" value="ECO:0007669"/>
    <property type="project" value="InterPro"/>
</dbReference>
<dbReference type="GO" id="GO:0006412">
    <property type="term" value="P:translation"/>
    <property type="evidence" value="ECO:0007669"/>
    <property type="project" value="UniProtKB-UniRule"/>
</dbReference>
<dbReference type="FunFam" id="2.40.30.10:FF:000004">
    <property type="entry name" value="50S ribosomal protein L3"/>
    <property type="match status" value="1"/>
</dbReference>
<dbReference type="FunFam" id="3.30.160.810:FF:000001">
    <property type="entry name" value="50S ribosomal protein L3"/>
    <property type="match status" value="1"/>
</dbReference>
<dbReference type="Gene3D" id="3.30.160.810">
    <property type="match status" value="1"/>
</dbReference>
<dbReference type="Gene3D" id="2.40.30.10">
    <property type="entry name" value="Translation factors"/>
    <property type="match status" value="1"/>
</dbReference>
<dbReference type="HAMAP" id="MF_01325_B">
    <property type="entry name" value="Ribosomal_uL3_B"/>
    <property type="match status" value="1"/>
</dbReference>
<dbReference type="InterPro" id="IPR000597">
    <property type="entry name" value="Ribosomal_uL3"/>
</dbReference>
<dbReference type="InterPro" id="IPR019927">
    <property type="entry name" value="Ribosomal_uL3_bac/org-type"/>
</dbReference>
<dbReference type="InterPro" id="IPR019926">
    <property type="entry name" value="Ribosomal_uL3_CS"/>
</dbReference>
<dbReference type="InterPro" id="IPR009000">
    <property type="entry name" value="Transl_B-barrel_sf"/>
</dbReference>
<dbReference type="NCBIfam" id="TIGR03625">
    <property type="entry name" value="L3_bact"/>
    <property type="match status" value="1"/>
</dbReference>
<dbReference type="PANTHER" id="PTHR11229">
    <property type="entry name" value="50S RIBOSOMAL PROTEIN L3"/>
    <property type="match status" value="1"/>
</dbReference>
<dbReference type="PANTHER" id="PTHR11229:SF16">
    <property type="entry name" value="LARGE RIBOSOMAL SUBUNIT PROTEIN UL3C"/>
    <property type="match status" value="1"/>
</dbReference>
<dbReference type="Pfam" id="PF00297">
    <property type="entry name" value="Ribosomal_L3"/>
    <property type="match status" value="1"/>
</dbReference>
<dbReference type="SUPFAM" id="SSF50447">
    <property type="entry name" value="Translation proteins"/>
    <property type="match status" value="1"/>
</dbReference>
<dbReference type="PROSITE" id="PS00474">
    <property type="entry name" value="RIBOSOMAL_L3"/>
    <property type="match status" value="1"/>
</dbReference>
<name>RL3_ALCBS</name>
<protein>
    <recommendedName>
        <fullName evidence="1">Large ribosomal subunit protein uL3</fullName>
    </recommendedName>
    <alternativeName>
        <fullName evidence="3">50S ribosomal protein L3</fullName>
    </alternativeName>
</protein>
<gene>
    <name evidence="1" type="primary">rplC</name>
    <name type="ordered locus">ABO_0397</name>
</gene>
<comment type="function">
    <text evidence="1">One of the primary rRNA binding proteins, it binds directly near the 3'-end of the 23S rRNA, where it nucleates assembly of the 50S subunit.</text>
</comment>
<comment type="subunit">
    <text evidence="1">Part of the 50S ribosomal subunit. Forms a cluster with proteins L14 and L19.</text>
</comment>
<comment type="PTM">
    <text evidence="1">Methylated by PrmB.</text>
</comment>
<comment type="similarity">
    <text evidence="1">Belongs to the universal ribosomal protein uL3 family.</text>
</comment>